<comment type="function">
    <text evidence="2">Involved in regulating synaptic transmission in presynaptic neurons (PubMed:32461240). In class IV dendritic arborization neurons (nociceptors), involved in regulating activation of their second-order neurons (SONs) and maintaining synaptic contact between nociceptors and their SONs (PubMed:32461240).</text>
</comment>
<comment type="developmental stage">
    <text evidence="2">In larvae, predominantly expressed in subsets of neurons, including a subset of sensory neurons comprising the class IV dendritic arborization (da) neurons (nociceptors), class III da neurons and chordotonal neurons (both mechanosensors).</text>
</comment>
<comment type="disruption phenotype">
    <text evidence="2">Larvae display reduced nociceptive rolling behavior due to impaired activation of second-order neurons (SONs) in the nociceptive pathway and reduced the synaptic contact between nociceptors and their SONs.</text>
</comment>
<comment type="similarity">
    <text evidence="4">Belongs to the yippee family.</text>
</comment>
<sequence length="114" mass="12923">MVKTFQAYLPSTNRTYSCVHCRAHLASHDELISKSFQGSQGPAYLFNSVVNVACGQTEERVLLTGLHAVADIYCECCKTPLGWKYEHAYESSQKYKEGKFIIELAHMIKENGWD</sequence>
<proteinExistence type="evidence at transcript level"/>
<organism>
    <name type="scientific">Drosophila melanogaster</name>
    <name type="common">Fruit fly</name>
    <dbReference type="NCBI Taxonomy" id="7227"/>
    <lineage>
        <taxon>Eukaryota</taxon>
        <taxon>Metazoa</taxon>
        <taxon>Ecdysozoa</taxon>
        <taxon>Arthropoda</taxon>
        <taxon>Hexapoda</taxon>
        <taxon>Insecta</taxon>
        <taxon>Pterygota</taxon>
        <taxon>Neoptera</taxon>
        <taxon>Endopterygota</taxon>
        <taxon>Diptera</taxon>
        <taxon>Brachycera</taxon>
        <taxon>Muscomorpha</taxon>
        <taxon>Ephydroidea</taxon>
        <taxon>Drosophilidae</taxon>
        <taxon>Drosophila</taxon>
        <taxon>Sophophora</taxon>
    </lineage>
</organism>
<name>YPL1_DROME</name>
<feature type="chain" id="PRO_0000212401" description="Protein yippee-like">
    <location>
        <begin position="1"/>
        <end position="114"/>
    </location>
</feature>
<feature type="domain" description="Yippee" evidence="1">
    <location>
        <begin position="14"/>
        <end position="111"/>
    </location>
</feature>
<feature type="binding site" evidence="1">
    <location>
        <position position="18"/>
    </location>
    <ligand>
        <name>Zn(2+)</name>
        <dbReference type="ChEBI" id="CHEBI:29105"/>
    </ligand>
</feature>
<feature type="binding site" evidence="1">
    <location>
        <position position="21"/>
    </location>
    <ligand>
        <name>Zn(2+)</name>
        <dbReference type="ChEBI" id="CHEBI:29105"/>
    </ligand>
</feature>
<feature type="binding site" evidence="1">
    <location>
        <position position="74"/>
    </location>
    <ligand>
        <name>Zn(2+)</name>
        <dbReference type="ChEBI" id="CHEBI:29105"/>
    </ligand>
</feature>
<feature type="binding site" evidence="1">
    <location>
        <position position="77"/>
    </location>
    <ligand>
        <name>Zn(2+)</name>
        <dbReference type="ChEBI" id="CHEBI:29105"/>
    </ligand>
</feature>
<keyword id="KW-0479">Metal-binding</keyword>
<keyword id="KW-1185">Reference proteome</keyword>
<keyword id="KW-0862">Zinc</keyword>
<accession>Q9W2X7</accession>
<accession>A8JUP6</accession>
<protein>
    <recommendedName>
        <fullName evidence="5">Protein yippee-like</fullName>
    </recommendedName>
    <alternativeName>
        <fullName evidence="3">Protein yippee-like 3</fullName>
    </alternativeName>
</protein>
<reference key="1">
    <citation type="journal article" date="2000" name="Science">
        <title>The genome sequence of Drosophila melanogaster.</title>
        <authorList>
            <person name="Adams M.D."/>
            <person name="Celniker S.E."/>
            <person name="Holt R.A."/>
            <person name="Evans C.A."/>
            <person name="Gocayne J.D."/>
            <person name="Amanatides P.G."/>
            <person name="Scherer S.E."/>
            <person name="Li P.W."/>
            <person name="Hoskins R.A."/>
            <person name="Galle R.F."/>
            <person name="George R.A."/>
            <person name="Lewis S.E."/>
            <person name="Richards S."/>
            <person name="Ashburner M."/>
            <person name="Henderson S.N."/>
            <person name="Sutton G.G."/>
            <person name="Wortman J.R."/>
            <person name="Yandell M.D."/>
            <person name="Zhang Q."/>
            <person name="Chen L.X."/>
            <person name="Brandon R.C."/>
            <person name="Rogers Y.-H.C."/>
            <person name="Blazej R.G."/>
            <person name="Champe M."/>
            <person name="Pfeiffer B.D."/>
            <person name="Wan K.H."/>
            <person name="Doyle C."/>
            <person name="Baxter E.G."/>
            <person name="Helt G."/>
            <person name="Nelson C.R."/>
            <person name="Miklos G.L.G."/>
            <person name="Abril J.F."/>
            <person name="Agbayani A."/>
            <person name="An H.-J."/>
            <person name="Andrews-Pfannkoch C."/>
            <person name="Baldwin D."/>
            <person name="Ballew R.M."/>
            <person name="Basu A."/>
            <person name="Baxendale J."/>
            <person name="Bayraktaroglu L."/>
            <person name="Beasley E.M."/>
            <person name="Beeson K.Y."/>
            <person name="Benos P.V."/>
            <person name="Berman B.P."/>
            <person name="Bhandari D."/>
            <person name="Bolshakov S."/>
            <person name="Borkova D."/>
            <person name="Botchan M.R."/>
            <person name="Bouck J."/>
            <person name="Brokstein P."/>
            <person name="Brottier P."/>
            <person name="Burtis K.C."/>
            <person name="Busam D.A."/>
            <person name="Butler H."/>
            <person name="Cadieu E."/>
            <person name="Center A."/>
            <person name="Chandra I."/>
            <person name="Cherry J.M."/>
            <person name="Cawley S."/>
            <person name="Dahlke C."/>
            <person name="Davenport L.B."/>
            <person name="Davies P."/>
            <person name="de Pablos B."/>
            <person name="Delcher A."/>
            <person name="Deng Z."/>
            <person name="Mays A.D."/>
            <person name="Dew I."/>
            <person name="Dietz S.M."/>
            <person name="Dodson K."/>
            <person name="Doup L.E."/>
            <person name="Downes M."/>
            <person name="Dugan-Rocha S."/>
            <person name="Dunkov B.C."/>
            <person name="Dunn P."/>
            <person name="Durbin K.J."/>
            <person name="Evangelista C.C."/>
            <person name="Ferraz C."/>
            <person name="Ferriera S."/>
            <person name="Fleischmann W."/>
            <person name="Fosler C."/>
            <person name="Gabrielian A.E."/>
            <person name="Garg N.S."/>
            <person name="Gelbart W.M."/>
            <person name="Glasser K."/>
            <person name="Glodek A."/>
            <person name="Gong F."/>
            <person name="Gorrell J.H."/>
            <person name="Gu Z."/>
            <person name="Guan P."/>
            <person name="Harris M."/>
            <person name="Harris N.L."/>
            <person name="Harvey D.A."/>
            <person name="Heiman T.J."/>
            <person name="Hernandez J.R."/>
            <person name="Houck J."/>
            <person name="Hostin D."/>
            <person name="Houston K.A."/>
            <person name="Howland T.J."/>
            <person name="Wei M.-H."/>
            <person name="Ibegwam C."/>
            <person name="Jalali M."/>
            <person name="Kalush F."/>
            <person name="Karpen G.H."/>
            <person name="Ke Z."/>
            <person name="Kennison J.A."/>
            <person name="Ketchum K.A."/>
            <person name="Kimmel B.E."/>
            <person name="Kodira C.D."/>
            <person name="Kraft C.L."/>
            <person name="Kravitz S."/>
            <person name="Kulp D."/>
            <person name="Lai Z."/>
            <person name="Lasko P."/>
            <person name="Lei Y."/>
            <person name="Levitsky A.A."/>
            <person name="Li J.H."/>
            <person name="Li Z."/>
            <person name="Liang Y."/>
            <person name="Lin X."/>
            <person name="Liu X."/>
            <person name="Mattei B."/>
            <person name="McIntosh T.C."/>
            <person name="McLeod M.P."/>
            <person name="McPherson D."/>
            <person name="Merkulov G."/>
            <person name="Milshina N.V."/>
            <person name="Mobarry C."/>
            <person name="Morris J."/>
            <person name="Moshrefi A."/>
            <person name="Mount S.M."/>
            <person name="Moy M."/>
            <person name="Murphy B."/>
            <person name="Murphy L."/>
            <person name="Muzny D.M."/>
            <person name="Nelson D.L."/>
            <person name="Nelson D.R."/>
            <person name="Nelson K.A."/>
            <person name="Nixon K."/>
            <person name="Nusskern D.R."/>
            <person name="Pacleb J.M."/>
            <person name="Palazzolo M."/>
            <person name="Pittman G.S."/>
            <person name="Pan S."/>
            <person name="Pollard J."/>
            <person name="Puri V."/>
            <person name="Reese M.G."/>
            <person name="Reinert K."/>
            <person name="Remington K."/>
            <person name="Saunders R.D.C."/>
            <person name="Scheeler F."/>
            <person name="Shen H."/>
            <person name="Shue B.C."/>
            <person name="Siden-Kiamos I."/>
            <person name="Simpson M."/>
            <person name="Skupski M.P."/>
            <person name="Smith T.J."/>
            <person name="Spier E."/>
            <person name="Spradling A.C."/>
            <person name="Stapleton M."/>
            <person name="Strong R."/>
            <person name="Sun E."/>
            <person name="Svirskas R."/>
            <person name="Tector C."/>
            <person name="Turner R."/>
            <person name="Venter E."/>
            <person name="Wang A.H."/>
            <person name="Wang X."/>
            <person name="Wang Z.-Y."/>
            <person name="Wassarman D.A."/>
            <person name="Weinstock G.M."/>
            <person name="Weissenbach J."/>
            <person name="Williams S.M."/>
            <person name="Woodage T."/>
            <person name="Worley K.C."/>
            <person name="Wu D."/>
            <person name="Yang S."/>
            <person name="Yao Q.A."/>
            <person name="Ye J."/>
            <person name="Yeh R.-F."/>
            <person name="Zaveri J.S."/>
            <person name="Zhan M."/>
            <person name="Zhang G."/>
            <person name="Zhao Q."/>
            <person name="Zheng L."/>
            <person name="Zheng X.H."/>
            <person name="Zhong F.N."/>
            <person name="Zhong W."/>
            <person name="Zhou X."/>
            <person name="Zhu S.C."/>
            <person name="Zhu X."/>
            <person name="Smith H.O."/>
            <person name="Gibbs R.A."/>
            <person name="Myers E.W."/>
            <person name="Rubin G.M."/>
            <person name="Venter J.C."/>
        </authorList>
    </citation>
    <scope>NUCLEOTIDE SEQUENCE [LARGE SCALE GENOMIC DNA]</scope>
    <source>
        <strain>Berkeley</strain>
    </source>
</reference>
<reference key="2">
    <citation type="journal article" date="2002" name="Genome Biol.">
        <title>Annotation of the Drosophila melanogaster euchromatic genome: a systematic review.</title>
        <authorList>
            <person name="Misra S."/>
            <person name="Crosby M.A."/>
            <person name="Mungall C.J."/>
            <person name="Matthews B.B."/>
            <person name="Campbell K.S."/>
            <person name="Hradecky P."/>
            <person name="Huang Y."/>
            <person name="Kaminker J.S."/>
            <person name="Millburn G.H."/>
            <person name="Prochnik S.E."/>
            <person name="Smith C.D."/>
            <person name="Tupy J.L."/>
            <person name="Whitfield E.J."/>
            <person name="Bayraktaroglu L."/>
            <person name="Berman B.P."/>
            <person name="Bettencourt B.R."/>
            <person name="Celniker S.E."/>
            <person name="de Grey A.D.N.J."/>
            <person name="Drysdale R.A."/>
            <person name="Harris N.L."/>
            <person name="Richter J."/>
            <person name="Russo S."/>
            <person name="Schroeder A.J."/>
            <person name="Shu S.Q."/>
            <person name="Stapleton M."/>
            <person name="Yamada C."/>
            <person name="Ashburner M."/>
            <person name="Gelbart W.M."/>
            <person name="Rubin G.M."/>
            <person name="Lewis S.E."/>
        </authorList>
    </citation>
    <scope>GENOME REANNOTATION</scope>
    <source>
        <strain>Berkeley</strain>
    </source>
</reference>
<reference key="3">
    <citation type="journal article" date="2002" name="Genome Biol.">
        <title>A Drosophila full-length cDNA resource.</title>
        <authorList>
            <person name="Stapleton M."/>
            <person name="Carlson J.W."/>
            <person name="Brokstein P."/>
            <person name="Yu C."/>
            <person name="Champe M."/>
            <person name="George R.A."/>
            <person name="Guarin H."/>
            <person name="Kronmiller B."/>
            <person name="Pacleb J.M."/>
            <person name="Park S."/>
            <person name="Wan K.H."/>
            <person name="Rubin G.M."/>
            <person name="Celniker S.E."/>
        </authorList>
    </citation>
    <scope>NUCLEOTIDE SEQUENCE [LARGE SCALE MRNA]</scope>
    <source>
        <strain>Berkeley</strain>
        <tissue>Head</tissue>
    </source>
</reference>
<reference key="4">
    <citation type="journal article" date="2020" name="Dis. Model. Mech.">
        <title>Frameshift mutations of YPEL3 alter the sensory circuit function in Drosophila.</title>
        <authorList>
            <person name="Kim J.H."/>
            <person name="Singh M."/>
            <person name="Pan G."/>
            <person name="Lopez A."/>
            <person name="Zito N."/>
            <person name="Bosse B."/>
            <person name="Ye B."/>
        </authorList>
    </citation>
    <scope>FUNCTION</scope>
    <scope>DEVELOPMENTAL STAGE</scope>
    <scope>DISRUPTION PHENOTYPE</scope>
</reference>
<dbReference type="EMBL" id="AE014298">
    <property type="protein sequence ID" value="AAF46560.1"/>
    <property type="molecule type" value="Genomic_DNA"/>
</dbReference>
<dbReference type="EMBL" id="AE014298">
    <property type="protein sequence ID" value="ABW09382.1"/>
    <property type="molecule type" value="Genomic_DNA"/>
</dbReference>
<dbReference type="EMBL" id="AY060270">
    <property type="protein sequence ID" value="AAL25309.1"/>
    <property type="molecule type" value="mRNA"/>
</dbReference>
<dbReference type="RefSeq" id="NP_001096936.1">
    <property type="nucleotide sequence ID" value="NM_001103466.3"/>
</dbReference>
<dbReference type="RefSeq" id="NP_001259394.1">
    <property type="nucleotide sequence ID" value="NM_001272465.1"/>
</dbReference>
<dbReference type="RefSeq" id="NP_001259395.1">
    <property type="nucleotide sequence ID" value="NM_001272466.1"/>
</dbReference>
<dbReference type="RefSeq" id="NP_001259396.1">
    <property type="nucleotide sequence ID" value="NM_001272467.1"/>
</dbReference>
<dbReference type="RefSeq" id="NP_572609.1">
    <property type="nucleotide sequence ID" value="NM_132381.4"/>
</dbReference>
<dbReference type="SMR" id="Q9W2X7"/>
<dbReference type="BioGRID" id="58384">
    <property type="interactions" value="4"/>
</dbReference>
<dbReference type="FunCoup" id="Q9W2X7">
    <property type="interactions" value="11"/>
</dbReference>
<dbReference type="IntAct" id="Q9W2X7">
    <property type="interactions" value="4"/>
</dbReference>
<dbReference type="STRING" id="7227.FBpp0305121"/>
<dbReference type="PaxDb" id="7227-FBpp0305119"/>
<dbReference type="DNASU" id="31949"/>
<dbReference type="EnsemblMetazoa" id="FBtr0071487">
    <property type="protein sequence ID" value="FBpp0071416"/>
    <property type="gene ID" value="FBgn0030183"/>
</dbReference>
<dbReference type="EnsemblMetazoa" id="FBtr0112974">
    <property type="protein sequence ID" value="FBpp0111887"/>
    <property type="gene ID" value="FBgn0030183"/>
</dbReference>
<dbReference type="EnsemblMetazoa" id="FBtr0332898">
    <property type="protein sequence ID" value="FBpp0305119"/>
    <property type="gene ID" value="FBgn0030183"/>
</dbReference>
<dbReference type="EnsemblMetazoa" id="FBtr0332899">
    <property type="protein sequence ID" value="FBpp0305120"/>
    <property type="gene ID" value="FBgn0030183"/>
</dbReference>
<dbReference type="EnsemblMetazoa" id="FBtr0332900">
    <property type="protein sequence ID" value="FBpp0305121"/>
    <property type="gene ID" value="FBgn0030183"/>
</dbReference>
<dbReference type="GeneID" id="31949"/>
<dbReference type="KEGG" id="dme:Dmel_CG15309"/>
<dbReference type="UCSC" id="CG15309-RA">
    <property type="organism name" value="d. melanogaster"/>
</dbReference>
<dbReference type="AGR" id="FB:FBgn0030183"/>
<dbReference type="CTD" id="31949"/>
<dbReference type="FlyBase" id="FBgn0030183">
    <property type="gene designation" value="Ypel"/>
</dbReference>
<dbReference type="VEuPathDB" id="VectorBase:FBgn0030183"/>
<dbReference type="eggNOG" id="KOG3399">
    <property type="taxonomic scope" value="Eukaryota"/>
</dbReference>
<dbReference type="GeneTree" id="ENSGT00940000159010"/>
<dbReference type="HOGENOM" id="CLU_043857_3_2_1"/>
<dbReference type="InParanoid" id="Q9W2X7"/>
<dbReference type="OMA" id="SSRIYGC"/>
<dbReference type="OrthoDB" id="6407410at2759"/>
<dbReference type="PhylomeDB" id="Q9W2X7"/>
<dbReference type="SignaLink" id="Q9W2X7"/>
<dbReference type="BioGRID-ORCS" id="31949">
    <property type="hits" value="0 hits in 3 CRISPR screens"/>
</dbReference>
<dbReference type="ChiTaRS" id="CG15309">
    <property type="organism name" value="fly"/>
</dbReference>
<dbReference type="GenomeRNAi" id="31949"/>
<dbReference type="PRO" id="PR:Q9W2X7"/>
<dbReference type="Proteomes" id="UP000000803">
    <property type="component" value="Chromosome X"/>
</dbReference>
<dbReference type="Bgee" id="FBgn0030183">
    <property type="expression patterns" value="Expressed in second segment of antenna (Drosophila) and 235 other cell types or tissues"/>
</dbReference>
<dbReference type="ExpressionAtlas" id="Q9W2X7">
    <property type="expression patterns" value="baseline and differential"/>
</dbReference>
<dbReference type="GO" id="GO:0046872">
    <property type="term" value="F:metal ion binding"/>
    <property type="evidence" value="ECO:0007669"/>
    <property type="project" value="UniProtKB-KW"/>
</dbReference>
<dbReference type="GO" id="GO:0050807">
    <property type="term" value="P:regulation of synapse organization"/>
    <property type="evidence" value="ECO:0000315"/>
    <property type="project" value="FlyBase"/>
</dbReference>
<dbReference type="InterPro" id="IPR034751">
    <property type="entry name" value="Yippee"/>
</dbReference>
<dbReference type="InterPro" id="IPR004910">
    <property type="entry name" value="Yippee/Mis18/Cereblon"/>
</dbReference>
<dbReference type="InterPro" id="IPR039058">
    <property type="entry name" value="Yippee_fam"/>
</dbReference>
<dbReference type="PANTHER" id="PTHR13848">
    <property type="entry name" value="PROTEIN YIPPEE-LIKE CG15309-RELATED"/>
    <property type="match status" value="1"/>
</dbReference>
<dbReference type="Pfam" id="PF03226">
    <property type="entry name" value="Yippee-Mis18"/>
    <property type="match status" value="1"/>
</dbReference>
<dbReference type="PROSITE" id="PS51792">
    <property type="entry name" value="YIPPEE"/>
    <property type="match status" value="1"/>
</dbReference>
<gene>
    <name evidence="5" type="primary">Ypel</name>
    <name evidence="3" type="synonym">Ypel3</name>
    <name evidence="5" type="ORF">CG15309</name>
</gene>
<evidence type="ECO:0000255" key="1">
    <source>
        <dbReference type="PROSITE-ProRule" id="PRU01128"/>
    </source>
</evidence>
<evidence type="ECO:0000269" key="2">
    <source>
    </source>
</evidence>
<evidence type="ECO:0000303" key="3">
    <source>
    </source>
</evidence>
<evidence type="ECO:0000305" key="4"/>
<evidence type="ECO:0000312" key="5">
    <source>
        <dbReference type="FlyBase" id="FBgn0030183"/>
    </source>
</evidence>